<evidence type="ECO:0000250" key="1"/>
<evidence type="ECO:0000255" key="2">
    <source>
        <dbReference type="HAMAP-Rule" id="MF_00186"/>
    </source>
</evidence>
<evidence type="ECO:0000269" key="3">
    <source>
    </source>
</evidence>
<evidence type="ECO:0000269" key="4">
    <source>
    </source>
</evidence>
<evidence type="ECO:0000269" key="5">
    <source>
    </source>
</evidence>
<evidence type="ECO:0007744" key="6">
    <source>
        <dbReference type="PDB" id="1R59"/>
    </source>
</evidence>
<evidence type="ECO:0007744" key="7">
    <source>
        <dbReference type="PDB" id="1XUP"/>
    </source>
</evidence>
<evidence type="ECO:0007744" key="8">
    <source>
        <dbReference type="PDB" id="3D7E"/>
    </source>
</evidence>
<evidence type="ECO:0007744" key="9">
    <source>
        <dbReference type="PDB" id="3FLC"/>
    </source>
</evidence>
<evidence type="ECO:0007744" key="10">
    <source>
        <dbReference type="PDB" id="3H3N"/>
    </source>
</evidence>
<evidence type="ECO:0007744" key="11">
    <source>
        <dbReference type="PDB" id="3H3O"/>
    </source>
</evidence>
<evidence type="ECO:0007744" key="12">
    <source>
        <dbReference type="PDB" id="3H45"/>
    </source>
</evidence>
<evidence type="ECO:0007744" key="13">
    <source>
        <dbReference type="PDB" id="3H46"/>
    </source>
</evidence>
<evidence type="ECO:0007829" key="14">
    <source>
        <dbReference type="PDB" id="1R59"/>
    </source>
</evidence>
<evidence type="ECO:0007829" key="15">
    <source>
        <dbReference type="PDB" id="1XUP"/>
    </source>
</evidence>
<evidence type="ECO:0007829" key="16">
    <source>
        <dbReference type="PDB" id="3D7E"/>
    </source>
</evidence>
<evidence type="ECO:0007829" key="17">
    <source>
        <dbReference type="PDB" id="3FLC"/>
    </source>
</evidence>
<evidence type="ECO:0007829" key="18">
    <source>
        <dbReference type="PDB" id="3H3N"/>
    </source>
</evidence>
<evidence type="ECO:0007829" key="19">
    <source>
        <dbReference type="PDB" id="3H46"/>
    </source>
</evidence>
<proteinExistence type="evidence at protein level"/>
<accession>O34153</accession>
<name>GLPK_ENTCA</name>
<dbReference type="EC" id="2.7.1.30" evidence="2"/>
<dbReference type="EMBL" id="U94355">
    <property type="protein sequence ID" value="AAB69985.1"/>
    <property type="molecule type" value="Genomic_DNA"/>
</dbReference>
<dbReference type="PDB" id="1R59">
    <property type="method" value="X-ray"/>
    <property type="resolution" value="2.50 A"/>
    <property type="chains" value="O/X=2-506"/>
</dbReference>
<dbReference type="PDB" id="1XUP">
    <property type="method" value="X-ray"/>
    <property type="resolution" value="2.75 A"/>
    <property type="chains" value="O/X=6-492"/>
</dbReference>
<dbReference type="PDB" id="3D7E">
    <property type="method" value="X-ray"/>
    <property type="resolution" value="2.03 A"/>
    <property type="chains" value="O/X=2-506"/>
</dbReference>
<dbReference type="PDB" id="3FLC">
    <property type="method" value="X-ray"/>
    <property type="resolution" value="1.85 A"/>
    <property type="chains" value="O/X=1-506"/>
</dbReference>
<dbReference type="PDB" id="3H3N">
    <property type="method" value="X-ray"/>
    <property type="resolution" value="1.73 A"/>
    <property type="chains" value="O/X=1-506"/>
</dbReference>
<dbReference type="PDB" id="3H3O">
    <property type="method" value="X-ray"/>
    <property type="resolution" value="2.30 A"/>
    <property type="chains" value="B/C/O/X=1-506"/>
</dbReference>
<dbReference type="PDB" id="3H45">
    <property type="method" value="X-ray"/>
    <property type="resolution" value="2.65 A"/>
    <property type="chains" value="C/D/O/X=1-506"/>
</dbReference>
<dbReference type="PDB" id="3H46">
    <property type="method" value="X-ray"/>
    <property type="resolution" value="1.75 A"/>
    <property type="chains" value="O/X=1-506"/>
</dbReference>
<dbReference type="PDBsum" id="1R59"/>
<dbReference type="PDBsum" id="1XUP"/>
<dbReference type="PDBsum" id="3D7E"/>
<dbReference type="PDBsum" id="3FLC"/>
<dbReference type="PDBsum" id="3H3N"/>
<dbReference type="PDBsum" id="3H3O"/>
<dbReference type="PDBsum" id="3H45"/>
<dbReference type="PDBsum" id="3H46"/>
<dbReference type="SMR" id="O34153"/>
<dbReference type="iPTMnet" id="O34153"/>
<dbReference type="UniPathway" id="UPA00618">
    <property type="reaction ID" value="UER00672"/>
</dbReference>
<dbReference type="EvolutionaryTrace" id="O34153"/>
<dbReference type="GO" id="GO:0005829">
    <property type="term" value="C:cytosol"/>
    <property type="evidence" value="ECO:0007669"/>
    <property type="project" value="TreeGrafter"/>
</dbReference>
<dbReference type="GO" id="GO:0005524">
    <property type="term" value="F:ATP binding"/>
    <property type="evidence" value="ECO:0007669"/>
    <property type="project" value="UniProtKB-UniRule"/>
</dbReference>
<dbReference type="GO" id="GO:0004370">
    <property type="term" value="F:glycerol kinase activity"/>
    <property type="evidence" value="ECO:0000250"/>
    <property type="project" value="UniProtKB"/>
</dbReference>
<dbReference type="GO" id="GO:0019563">
    <property type="term" value="P:glycerol catabolic process"/>
    <property type="evidence" value="ECO:0007669"/>
    <property type="project" value="UniProtKB-UniRule"/>
</dbReference>
<dbReference type="GO" id="GO:0006071">
    <property type="term" value="P:glycerol metabolic process"/>
    <property type="evidence" value="ECO:0000250"/>
    <property type="project" value="UniProtKB"/>
</dbReference>
<dbReference type="GO" id="GO:0006072">
    <property type="term" value="P:glycerol-3-phosphate metabolic process"/>
    <property type="evidence" value="ECO:0007669"/>
    <property type="project" value="InterPro"/>
</dbReference>
<dbReference type="CDD" id="cd07786">
    <property type="entry name" value="FGGY_EcGK_like"/>
    <property type="match status" value="1"/>
</dbReference>
<dbReference type="FunFam" id="3.30.420.40:FF:000007">
    <property type="entry name" value="Glycerol kinase"/>
    <property type="match status" value="1"/>
</dbReference>
<dbReference type="FunFam" id="3.30.420.40:FF:000008">
    <property type="entry name" value="Glycerol kinase"/>
    <property type="match status" value="1"/>
</dbReference>
<dbReference type="Gene3D" id="3.30.420.40">
    <property type="match status" value="2"/>
</dbReference>
<dbReference type="HAMAP" id="MF_00186">
    <property type="entry name" value="Glycerol_kin"/>
    <property type="match status" value="1"/>
</dbReference>
<dbReference type="InterPro" id="IPR043129">
    <property type="entry name" value="ATPase_NBD"/>
</dbReference>
<dbReference type="InterPro" id="IPR000577">
    <property type="entry name" value="Carb_kinase_FGGY"/>
</dbReference>
<dbReference type="InterPro" id="IPR018483">
    <property type="entry name" value="Carb_kinase_FGGY_CS"/>
</dbReference>
<dbReference type="InterPro" id="IPR018485">
    <property type="entry name" value="FGGY_C"/>
</dbReference>
<dbReference type="InterPro" id="IPR018484">
    <property type="entry name" value="FGGY_N"/>
</dbReference>
<dbReference type="InterPro" id="IPR005999">
    <property type="entry name" value="Glycerol_kin"/>
</dbReference>
<dbReference type="NCBIfam" id="TIGR01311">
    <property type="entry name" value="glycerol_kin"/>
    <property type="match status" value="1"/>
</dbReference>
<dbReference type="NCBIfam" id="NF000756">
    <property type="entry name" value="PRK00047.1"/>
    <property type="match status" value="1"/>
</dbReference>
<dbReference type="PANTHER" id="PTHR10196:SF69">
    <property type="entry name" value="GLYCEROL KINASE"/>
    <property type="match status" value="1"/>
</dbReference>
<dbReference type="PANTHER" id="PTHR10196">
    <property type="entry name" value="SUGAR KINASE"/>
    <property type="match status" value="1"/>
</dbReference>
<dbReference type="Pfam" id="PF02782">
    <property type="entry name" value="FGGY_C"/>
    <property type="match status" value="1"/>
</dbReference>
<dbReference type="Pfam" id="PF00370">
    <property type="entry name" value="FGGY_N"/>
    <property type="match status" value="1"/>
</dbReference>
<dbReference type="PIRSF" id="PIRSF000538">
    <property type="entry name" value="GlpK"/>
    <property type="match status" value="1"/>
</dbReference>
<dbReference type="SUPFAM" id="SSF53067">
    <property type="entry name" value="Actin-like ATPase domain"/>
    <property type="match status" value="2"/>
</dbReference>
<dbReference type="PROSITE" id="PS00933">
    <property type="entry name" value="FGGY_KINASES_1"/>
    <property type="match status" value="1"/>
</dbReference>
<dbReference type="PROSITE" id="PS00445">
    <property type="entry name" value="FGGY_KINASES_2"/>
    <property type="match status" value="1"/>
</dbReference>
<keyword id="KW-0002">3D-structure</keyword>
<keyword id="KW-0067">ATP-binding</keyword>
<keyword id="KW-0319">Glycerol metabolism</keyword>
<keyword id="KW-0418">Kinase</keyword>
<keyword id="KW-0547">Nucleotide-binding</keyword>
<keyword id="KW-0597">Phosphoprotein</keyword>
<keyword id="KW-0808">Transferase</keyword>
<sequence length="506" mass="55760">MAEKNYVMAIDQGTTSSRAIIFDRNGKKIGSSQKEFPQYFPKSGWVEHNANEIWNSVQSVIAGAFIESGIRPEAIAGIGITNQRETTVVWDKTTGQPIANAIVWQSRQSSPIADQLKVDGHTEMIHEKTGLVIDAYFSATKVRWLLDNIEGAQEKADNGELLFGTIDSWLVWKLTDGQVHVTDYSNASRTMLYNIHKLEWDQEILDLLNIPSSMLPEVKSNSEVYGHTRSYHFYGSEVPIAGMAGDQQAALFGQMAFEKGMIKNTYGTGAFIVMNTGEEPQLSDNDLLTTIGYGINGKVYYALEGSIFVAGSAIQWLRDGLRMIETSPQSEELAAKAKGDNEVYVVPAFTGLGAPYWDSEARGAVFGLTRGTTKEDFVRATLQAVAYQSKDVIDTMKKDSGIDIPLLKVDGGAAKNDLLMQFQADILDIDVQRAANLETTALGAAYLAGLAVGFWKDLDELKSMAEEGQMFTPEMPAEERDNLYEGWKQAVAATQTFKFKAKKEGE</sequence>
<comment type="function">
    <text evidence="2 5">Key enzyme in the regulation of glycerol uptake and metabolism. Catalyzes the phosphorylation of glycerol to yield sn-glycerol 3-phosphate.</text>
</comment>
<comment type="catalytic activity">
    <reaction evidence="2">
        <text>glycerol + ATP = sn-glycerol 3-phosphate + ADP + H(+)</text>
        <dbReference type="Rhea" id="RHEA:21644"/>
        <dbReference type="ChEBI" id="CHEBI:15378"/>
        <dbReference type="ChEBI" id="CHEBI:17754"/>
        <dbReference type="ChEBI" id="CHEBI:30616"/>
        <dbReference type="ChEBI" id="CHEBI:57597"/>
        <dbReference type="ChEBI" id="CHEBI:456216"/>
        <dbReference type="EC" id="2.7.1.30"/>
    </reaction>
</comment>
<comment type="activity regulation">
    <text evidence="2 3 5">Activated by phosphorylation and inhibited by fructose 1,6-bisphosphate (FBP).</text>
</comment>
<comment type="pathway">
    <text evidence="2">Polyol metabolism; glycerol degradation via glycerol kinase pathway; sn-glycerol 3-phosphate from glycerol: step 1/1.</text>
</comment>
<comment type="subunit">
    <text evidence="2 3 4">Homotetramer and homodimer (in equilibrium).</text>
</comment>
<comment type="PTM">
    <text evidence="5">The phosphoenolpyruvate-dependent sugar phosphotransferase system (PTS), including enzyme I, and histidine-containing protein (HPr) are required for the phosphorylation of His-232, which leads to the activation of the enzyme.</text>
</comment>
<comment type="similarity">
    <text evidence="2">Belongs to the FGGY kinase family.</text>
</comment>
<feature type="initiator methionine" description="Removed" evidence="1">
    <location>
        <position position="1"/>
    </location>
</feature>
<feature type="chain" id="PRO_0000059454" description="Glycerol kinase">
    <location>
        <begin position="2"/>
        <end position="506"/>
    </location>
</feature>
<feature type="binding site" evidence="2">
    <location>
        <position position="14"/>
    </location>
    <ligand>
        <name>ADP</name>
        <dbReference type="ChEBI" id="CHEBI:456216"/>
    </ligand>
</feature>
<feature type="binding site" evidence="2">
    <location>
        <position position="14"/>
    </location>
    <ligand>
        <name>ATP</name>
        <dbReference type="ChEBI" id="CHEBI:30616"/>
    </ligand>
</feature>
<feature type="binding site" evidence="2">
    <location>
        <position position="14"/>
    </location>
    <ligand>
        <name>sn-glycerol 3-phosphate</name>
        <dbReference type="ChEBI" id="CHEBI:57597"/>
    </ligand>
</feature>
<feature type="binding site" evidence="2">
    <location>
        <position position="15"/>
    </location>
    <ligand>
        <name>ATP</name>
        <dbReference type="ChEBI" id="CHEBI:30616"/>
    </ligand>
</feature>
<feature type="binding site" evidence="2">
    <location>
        <position position="16"/>
    </location>
    <ligand>
        <name>ATP</name>
        <dbReference type="ChEBI" id="CHEBI:30616"/>
    </ligand>
</feature>
<feature type="binding site" evidence="2">
    <location>
        <position position="18"/>
    </location>
    <ligand>
        <name>ADP</name>
        <dbReference type="ChEBI" id="CHEBI:456216"/>
    </ligand>
</feature>
<feature type="binding site" evidence="2 3 4 7 8">
    <location>
        <position position="84"/>
    </location>
    <ligand>
        <name>glycerol</name>
        <dbReference type="ChEBI" id="CHEBI:17754"/>
    </ligand>
</feature>
<feature type="binding site" evidence="2">
    <location>
        <position position="84"/>
    </location>
    <ligand>
        <name>sn-glycerol 3-phosphate</name>
        <dbReference type="ChEBI" id="CHEBI:57597"/>
    </ligand>
</feature>
<feature type="binding site" evidence="2 3 4 7 8">
    <location>
        <position position="85"/>
    </location>
    <ligand>
        <name>glycerol</name>
        <dbReference type="ChEBI" id="CHEBI:17754"/>
    </ligand>
</feature>
<feature type="binding site" evidence="2">
    <location>
        <position position="85"/>
    </location>
    <ligand>
        <name>sn-glycerol 3-phosphate</name>
        <dbReference type="ChEBI" id="CHEBI:57597"/>
    </ligand>
</feature>
<feature type="binding site" evidence="2 3 4 7 8">
    <location>
        <position position="136"/>
    </location>
    <ligand>
        <name>glycerol</name>
        <dbReference type="ChEBI" id="CHEBI:17754"/>
    </ligand>
</feature>
<feature type="binding site" evidence="2">
    <location>
        <position position="136"/>
    </location>
    <ligand>
        <name>sn-glycerol 3-phosphate</name>
        <dbReference type="ChEBI" id="CHEBI:57597"/>
    </ligand>
</feature>
<feature type="binding site" evidence="2 3 4 7 8">
    <location>
        <position position="246"/>
    </location>
    <ligand>
        <name>glycerol</name>
        <dbReference type="ChEBI" id="CHEBI:17754"/>
    </ligand>
</feature>
<feature type="binding site" evidence="2">
    <location>
        <position position="246"/>
    </location>
    <ligand>
        <name>sn-glycerol 3-phosphate</name>
        <dbReference type="ChEBI" id="CHEBI:57597"/>
    </ligand>
</feature>
<feature type="binding site" evidence="2 4 8">
    <location>
        <position position="247"/>
    </location>
    <ligand>
        <name>glycerol</name>
        <dbReference type="ChEBI" id="CHEBI:17754"/>
    </ligand>
</feature>
<feature type="binding site" evidence="2">
    <location>
        <position position="268"/>
    </location>
    <ligand>
        <name>ADP</name>
        <dbReference type="ChEBI" id="CHEBI:456216"/>
    </ligand>
</feature>
<feature type="binding site" evidence="2">
    <location>
        <position position="268"/>
    </location>
    <ligand>
        <name>ATP</name>
        <dbReference type="ChEBI" id="CHEBI:30616"/>
    </ligand>
</feature>
<feature type="binding site" evidence="2">
    <location>
        <position position="311"/>
    </location>
    <ligand>
        <name>ADP</name>
        <dbReference type="ChEBI" id="CHEBI:456216"/>
    </ligand>
</feature>
<feature type="binding site" evidence="2">
    <location>
        <position position="311"/>
    </location>
    <ligand>
        <name>ATP</name>
        <dbReference type="ChEBI" id="CHEBI:30616"/>
    </ligand>
</feature>
<feature type="binding site" evidence="2">
    <location>
        <position position="315"/>
    </location>
    <ligand>
        <name>ATP</name>
        <dbReference type="ChEBI" id="CHEBI:30616"/>
    </ligand>
</feature>
<feature type="binding site" evidence="2">
    <location>
        <position position="412"/>
    </location>
    <ligand>
        <name>ADP</name>
        <dbReference type="ChEBI" id="CHEBI:456216"/>
    </ligand>
</feature>
<feature type="binding site" evidence="2">
    <location>
        <position position="412"/>
    </location>
    <ligand>
        <name>ATP</name>
        <dbReference type="ChEBI" id="CHEBI:30616"/>
    </ligand>
</feature>
<feature type="binding site" evidence="2">
    <location>
        <position position="416"/>
    </location>
    <ligand>
        <name>ADP</name>
        <dbReference type="ChEBI" id="CHEBI:456216"/>
    </ligand>
</feature>
<feature type="modified residue" description="Phosphohistidine; by HPr" evidence="2 5">
    <location>
        <position position="232"/>
    </location>
</feature>
<feature type="mutagenesis site" description="Loss of phosphorylation, no effect on activity." evidence="4 5">
    <original>H</original>
    <variation>A</variation>
    <location>
        <position position="232"/>
    </location>
</feature>
<feature type="mutagenesis site" description="Loss of phosphorylation, 2.5-fold reduced activity." evidence="4 5">
    <original>H</original>
    <variation>E</variation>
    <location>
        <position position="232"/>
    </location>
</feature>
<feature type="mutagenesis site" description="Loss of phosphorylation, 3.4-fold increased activity." evidence="4 5">
    <original>H</original>
    <variation>R</variation>
    <location>
        <position position="232"/>
    </location>
</feature>
<feature type="strand" evidence="18">
    <location>
        <begin position="6"/>
        <end position="12"/>
    </location>
</feature>
<feature type="strand" evidence="18">
    <location>
        <begin position="14"/>
        <end position="23"/>
    </location>
</feature>
<feature type="strand" evidence="14">
    <location>
        <begin position="24"/>
        <end position="26"/>
    </location>
</feature>
<feature type="strand" evidence="18">
    <location>
        <begin position="28"/>
        <end position="35"/>
    </location>
</feature>
<feature type="helix" evidence="18">
    <location>
        <begin position="50"/>
        <end position="68"/>
    </location>
</feature>
<feature type="helix" evidence="18">
    <location>
        <begin position="72"/>
        <end position="74"/>
    </location>
</feature>
<feature type="strand" evidence="18">
    <location>
        <begin position="75"/>
        <end position="82"/>
    </location>
</feature>
<feature type="strand" evidence="18">
    <location>
        <begin position="87"/>
        <end position="91"/>
    </location>
</feature>
<feature type="turn" evidence="18">
    <location>
        <begin position="92"/>
        <end position="94"/>
    </location>
</feature>
<feature type="strand" evidence="18">
    <location>
        <begin position="97"/>
        <end position="99"/>
    </location>
</feature>
<feature type="helix" evidence="18">
    <location>
        <begin position="110"/>
        <end position="118"/>
    </location>
</feature>
<feature type="helix" evidence="18">
    <location>
        <begin position="122"/>
        <end position="129"/>
    </location>
</feature>
<feature type="strand" evidence="15">
    <location>
        <begin position="135"/>
        <end position="137"/>
    </location>
</feature>
<feature type="helix" evidence="18">
    <location>
        <begin position="138"/>
        <end position="148"/>
    </location>
</feature>
<feature type="strand" evidence="15">
    <location>
        <begin position="149"/>
        <end position="151"/>
    </location>
</feature>
<feature type="helix" evidence="18">
    <location>
        <begin position="152"/>
        <end position="157"/>
    </location>
</feature>
<feature type="strand" evidence="18">
    <location>
        <begin position="161"/>
        <end position="164"/>
    </location>
</feature>
<feature type="helix" evidence="18">
    <location>
        <begin position="166"/>
        <end position="174"/>
    </location>
</feature>
<feature type="turn" evidence="18">
    <location>
        <begin position="175"/>
        <end position="177"/>
    </location>
</feature>
<feature type="strand" evidence="18">
    <location>
        <begin position="181"/>
        <end position="183"/>
    </location>
</feature>
<feature type="helix" evidence="18">
    <location>
        <begin position="184"/>
        <end position="188"/>
    </location>
</feature>
<feature type="turn" evidence="18">
    <location>
        <begin position="189"/>
        <end position="191"/>
    </location>
</feature>
<feature type="strand" evidence="18">
    <location>
        <begin position="192"/>
        <end position="194"/>
    </location>
</feature>
<feature type="turn" evidence="18">
    <location>
        <begin position="195"/>
        <end position="198"/>
    </location>
</feature>
<feature type="helix" evidence="18">
    <location>
        <begin position="202"/>
        <end position="207"/>
    </location>
</feature>
<feature type="helix" evidence="18">
    <location>
        <begin position="212"/>
        <end position="214"/>
    </location>
</feature>
<feature type="strand" evidence="18">
    <location>
        <begin position="217"/>
        <end position="219"/>
    </location>
</feature>
<feature type="strand" evidence="18">
    <location>
        <begin position="221"/>
        <end position="227"/>
    </location>
</feature>
<feature type="helix" evidence="18">
    <location>
        <begin position="230"/>
        <end position="232"/>
    </location>
</feature>
<feature type="turn" evidence="18">
    <location>
        <begin position="233"/>
        <end position="235"/>
    </location>
</feature>
<feature type="strand" evidence="18">
    <location>
        <begin position="239"/>
        <end position="245"/>
    </location>
</feature>
<feature type="helix" evidence="18">
    <location>
        <begin position="246"/>
        <end position="253"/>
    </location>
</feature>
<feature type="strand" evidence="18">
    <location>
        <begin position="262"/>
        <end position="277"/>
    </location>
</feature>
<feature type="turn" evidence="16">
    <location>
        <begin position="284"/>
        <end position="286"/>
    </location>
</feature>
<feature type="strand" evidence="18">
    <location>
        <begin position="287"/>
        <end position="295"/>
    </location>
</feature>
<feature type="strand" evidence="18">
    <location>
        <begin position="298"/>
        <end position="307"/>
    </location>
</feature>
<feature type="helix" evidence="18">
    <location>
        <begin position="312"/>
        <end position="319"/>
    </location>
</feature>
<feature type="strand" evidence="19">
    <location>
        <begin position="324"/>
        <end position="327"/>
    </location>
</feature>
<feature type="helix" evidence="18">
    <location>
        <begin position="329"/>
        <end position="334"/>
    </location>
</feature>
<feature type="strand" evidence="14">
    <location>
        <begin position="335"/>
        <end position="339"/>
    </location>
</feature>
<feature type="strand" evidence="18">
    <location>
        <begin position="344"/>
        <end position="346"/>
    </location>
</feature>
<feature type="strand" evidence="15">
    <location>
        <begin position="349"/>
        <end position="351"/>
    </location>
</feature>
<feature type="turn" evidence="18">
    <location>
        <begin position="354"/>
        <end position="356"/>
    </location>
</feature>
<feature type="strand" evidence="18">
    <location>
        <begin position="364"/>
        <end position="366"/>
    </location>
</feature>
<feature type="helix" evidence="18">
    <location>
        <begin position="374"/>
        <end position="400"/>
    </location>
</feature>
<feature type="strand" evidence="18">
    <location>
        <begin position="406"/>
        <end position="411"/>
    </location>
</feature>
<feature type="helix" evidence="18">
    <location>
        <begin position="412"/>
        <end position="415"/>
    </location>
</feature>
<feature type="helix" evidence="18">
    <location>
        <begin position="417"/>
        <end position="427"/>
    </location>
</feature>
<feature type="strand" evidence="18">
    <location>
        <begin position="429"/>
        <end position="433"/>
    </location>
</feature>
<feature type="strand" evidence="18">
    <location>
        <begin position="435"/>
        <end position="437"/>
    </location>
</feature>
<feature type="helix" evidence="18">
    <location>
        <begin position="439"/>
        <end position="451"/>
    </location>
</feature>
<feature type="helix" evidence="18">
    <location>
        <begin position="458"/>
        <end position="462"/>
    </location>
</feature>
<feature type="strand" evidence="17">
    <location>
        <begin position="467"/>
        <end position="471"/>
    </location>
</feature>
<feature type="helix" evidence="18">
    <location>
        <begin position="477"/>
        <end position="496"/>
    </location>
</feature>
<organism>
    <name type="scientific">Enterococcus casseliflavus</name>
    <name type="common">Enterococcus flavescens</name>
    <dbReference type="NCBI Taxonomy" id="37734"/>
    <lineage>
        <taxon>Bacteria</taxon>
        <taxon>Bacillati</taxon>
        <taxon>Bacillota</taxon>
        <taxon>Bacilli</taxon>
        <taxon>Lactobacillales</taxon>
        <taxon>Enterococcaceae</taxon>
        <taxon>Enterococcus</taxon>
    </lineage>
</organism>
<gene>
    <name evidence="2" type="primary">glpK</name>
</gene>
<reference key="1">
    <citation type="journal article" date="1997" name="J. Biol. Chem.">
        <title>Cloning and sequencing of two enterococcal glpK genes and regulation of the encoded glycerol kinases by phosphoenolpyruvate-dependent, phosphotransferase system-catalyzed phosphorylation of a single histidyl residue.</title>
        <authorList>
            <person name="Charrier V."/>
            <person name="Buckley E."/>
            <person name="Parsonage D."/>
            <person name="Galinier A."/>
            <person name="Darbon E."/>
            <person name="Jaquinod M."/>
            <person name="Forest E."/>
            <person name="Deutscher J."/>
            <person name="Claiborne A."/>
        </authorList>
    </citation>
    <scope>NUCLEOTIDE SEQUENCE [GENOMIC DNA]</scope>
    <scope>FUNCTION</scope>
    <scope>PHOSPHORYLATION AT HIS-232</scope>
    <scope>MUTAGENESIS OF HIS-232</scope>
    <scope>ACTIVITY REGULATION</scope>
    <source>
        <strain>ATCC 12755 / DSM 4841 / NCFB 2725 / 491</strain>
    </source>
</reference>
<reference evidence="6 7" key="2">
    <citation type="journal article" date="2004" name="Biochemistry">
        <title>Structures of enterococcal glycerol kinase in the absence and presence of glycerol: correlation of conformation to substrate binding and a mechanism of activation by phosphorylation.</title>
        <authorList>
            <person name="Yeh J.I."/>
            <person name="Charrier V."/>
            <person name="Paulo J."/>
            <person name="Hou L."/>
            <person name="Darbon E."/>
            <person name="Claiborne A."/>
            <person name="Hol W.G.J."/>
            <person name="Deutscher J."/>
        </authorList>
    </citation>
    <scope>X-RAY CRYSTALLOGRAPHY (2.5 ANGSTROMS) IN SUBSTRATE-FREE FORM AND IN COMPLEX WITH GLYCEROL</scope>
    <scope>ACTIVITY REGULATION</scope>
    <scope>SUBUNIT</scope>
</reference>
<reference evidence="8 9 10 11 12 13" key="3">
    <citation type="journal article" date="2009" name="Biochemistry">
        <title>Structural characterizations of glycerol kinase: unraveling phosphorylation-induced long-range activation.</title>
        <authorList>
            <person name="Yeh J.I."/>
            <person name="Kettering R."/>
            <person name="Saxl R."/>
            <person name="Bourand A."/>
            <person name="Darbon E."/>
            <person name="Joly N."/>
            <person name="Briozzo P."/>
            <person name="Deutscher J."/>
        </authorList>
    </citation>
    <scope>X-RAY CRYSTALLOGRAPHY (2.03 ANGSTROMS) OF MUTANTS ARG-232; GLU-232 AND ALA-232 IN COMPLEX WITH GLYCEROL</scope>
    <scope>MUTAGENESIS OF HIS-232</scope>
    <scope>SUBUNIT</scope>
</reference>
<protein>
    <recommendedName>
        <fullName evidence="2">Glycerol kinase</fullName>
        <ecNumber evidence="2">2.7.1.30</ecNumber>
    </recommendedName>
    <alternativeName>
        <fullName evidence="2">ATP:glycerol 3-phosphotransferase</fullName>
    </alternativeName>
    <alternativeName>
        <fullName evidence="2">Glycerokinase</fullName>
        <shortName evidence="2">GK</shortName>
    </alternativeName>
</protein>